<comment type="function">
    <text evidence="3">Serine protease inhibitor that strongly inhibits chymotrypsin (Ki=84.6 nM) and trypsin (Ki=391 nM).</text>
</comment>
<comment type="subcellular location">
    <subcellularLocation>
        <location evidence="3">Secreted</location>
    </subcellularLocation>
</comment>
<comment type="tissue specificity">
    <text evidence="5">Expressed by the venom gland.</text>
</comment>
<comment type="mass spectrometry"/>
<comment type="similarity">
    <text evidence="4">Belongs to the venom Kunitz-type family.</text>
</comment>
<dbReference type="EMBL" id="EU246692">
    <property type="protein sequence ID" value="ABY74980.1"/>
    <property type="molecule type" value="mRNA"/>
</dbReference>
<dbReference type="SMR" id="B6RLX2"/>
<dbReference type="MEROPS" id="I02.055"/>
<dbReference type="TopDownProteomics" id="B6RLX2"/>
<dbReference type="GO" id="GO:0005576">
    <property type="term" value="C:extracellular region"/>
    <property type="evidence" value="ECO:0007669"/>
    <property type="project" value="UniProtKB-SubCell"/>
</dbReference>
<dbReference type="GO" id="GO:0004867">
    <property type="term" value="F:serine-type endopeptidase inhibitor activity"/>
    <property type="evidence" value="ECO:0007669"/>
    <property type="project" value="UniProtKB-KW"/>
</dbReference>
<dbReference type="CDD" id="cd22594">
    <property type="entry name" value="Kunitz_textilinin-like"/>
    <property type="match status" value="1"/>
</dbReference>
<dbReference type="FunFam" id="4.10.410.10:FF:000021">
    <property type="entry name" value="Serine protease inhibitor, putative"/>
    <property type="match status" value="1"/>
</dbReference>
<dbReference type="Gene3D" id="4.10.410.10">
    <property type="entry name" value="Pancreatic trypsin inhibitor Kunitz domain"/>
    <property type="match status" value="1"/>
</dbReference>
<dbReference type="InterPro" id="IPR002223">
    <property type="entry name" value="Kunitz_BPTI"/>
</dbReference>
<dbReference type="InterPro" id="IPR036880">
    <property type="entry name" value="Kunitz_BPTI_sf"/>
</dbReference>
<dbReference type="InterPro" id="IPR020901">
    <property type="entry name" value="Prtase_inh_Kunz-CS"/>
</dbReference>
<dbReference type="InterPro" id="IPR050098">
    <property type="entry name" value="TFPI/VKTCI-like"/>
</dbReference>
<dbReference type="PANTHER" id="PTHR10083">
    <property type="entry name" value="KUNITZ-TYPE PROTEASE INHIBITOR-RELATED"/>
    <property type="match status" value="1"/>
</dbReference>
<dbReference type="Pfam" id="PF00014">
    <property type="entry name" value="Kunitz_BPTI"/>
    <property type="match status" value="1"/>
</dbReference>
<dbReference type="PRINTS" id="PR00759">
    <property type="entry name" value="BASICPTASE"/>
</dbReference>
<dbReference type="SMART" id="SM00131">
    <property type="entry name" value="KU"/>
    <property type="match status" value="1"/>
</dbReference>
<dbReference type="SUPFAM" id="SSF57362">
    <property type="entry name" value="BPTI-like"/>
    <property type="match status" value="1"/>
</dbReference>
<dbReference type="PROSITE" id="PS00280">
    <property type="entry name" value="BPTI_KUNITZ_1"/>
    <property type="match status" value="1"/>
</dbReference>
<dbReference type="PROSITE" id="PS50279">
    <property type="entry name" value="BPTI_KUNITZ_2"/>
    <property type="match status" value="1"/>
</dbReference>
<keyword id="KW-0903">Direct protein sequencing</keyword>
<keyword id="KW-1015">Disulfide bond</keyword>
<keyword id="KW-0646">Protease inhibitor</keyword>
<keyword id="KW-0964">Secreted</keyword>
<keyword id="KW-0722">Serine protease inhibitor</keyword>
<keyword id="KW-0732">Signal</keyword>
<sequence>MSSGRLLLLLGLLTLWAELTPVSGLGRPKFCELPAVSGFCKAYIPSFYYNPDASACQKFIYGGCGGNANKFKTIEECHRTCVG</sequence>
<proteinExistence type="evidence at protein level"/>
<evidence type="ECO:0000250" key="1"/>
<evidence type="ECO:0000255" key="2">
    <source>
        <dbReference type="PROSITE-ProRule" id="PRU00031"/>
    </source>
</evidence>
<evidence type="ECO:0000269" key="3">
    <source>
    </source>
</evidence>
<evidence type="ECO:0000305" key="4"/>
<evidence type="ECO:0000305" key="5">
    <source>
    </source>
</evidence>
<organism>
    <name type="scientific">Ophiophagus hannah</name>
    <name type="common">King cobra</name>
    <name type="synonym">Naja hannah</name>
    <dbReference type="NCBI Taxonomy" id="8665"/>
    <lineage>
        <taxon>Eukaryota</taxon>
        <taxon>Metazoa</taxon>
        <taxon>Chordata</taxon>
        <taxon>Craniata</taxon>
        <taxon>Vertebrata</taxon>
        <taxon>Euteleostomi</taxon>
        <taxon>Lepidosauria</taxon>
        <taxon>Squamata</taxon>
        <taxon>Bifurcata</taxon>
        <taxon>Unidentata</taxon>
        <taxon>Episquamata</taxon>
        <taxon>Toxicofera</taxon>
        <taxon>Serpentes</taxon>
        <taxon>Colubroidea</taxon>
        <taxon>Elapidae</taxon>
        <taxon>Elapinae</taxon>
        <taxon>Ophiophagus</taxon>
    </lineage>
</organism>
<feature type="signal peptide" evidence="3">
    <location>
        <begin position="1"/>
        <end position="25"/>
    </location>
</feature>
<feature type="chain" id="PRO_0000377473" description="Kunitz-type serine protease inhibitor TCI">
    <location>
        <begin position="26"/>
        <end position="83"/>
    </location>
</feature>
<feature type="domain" description="BPTI/Kunitz inhibitor" evidence="2">
    <location>
        <begin position="31"/>
        <end position="81"/>
    </location>
</feature>
<feature type="site" description="Reactive bond for trypsin" evidence="1">
    <location>
        <begin position="41"/>
        <end position="42"/>
    </location>
</feature>
<feature type="disulfide bond" evidence="2">
    <location>
        <begin position="31"/>
        <end position="81"/>
    </location>
</feature>
<feature type="disulfide bond" evidence="2">
    <location>
        <begin position="40"/>
        <end position="64"/>
    </location>
</feature>
<feature type="disulfide bond" evidence="2">
    <location>
        <begin position="56"/>
        <end position="77"/>
    </location>
</feature>
<reference key="1">
    <citation type="journal article" date="2008" name="Peptides">
        <title>Isolation, expression and characterization of a novel dual serine protease inhibitor, OH-TCI, from king cobra venom.</title>
        <authorList>
            <person name="He Y.-Y."/>
            <person name="Liu S.-B."/>
            <person name="Lee W.-H."/>
            <person name="Qian J.-Q."/>
            <person name="Zhang Y."/>
        </authorList>
    </citation>
    <scope>NUCLEOTIDE SEQUENCE [MRNA]</scope>
    <scope>PROTEIN SEQUENCE OF 26-45</scope>
    <scope>FUNCTION</scope>
    <scope>MASS SPECTROMETRY</scope>
    <scope>SUBCELLULAR LOCATION</scope>
    <source>
        <tissue>Venom</tissue>
        <tissue>Venom gland</tissue>
    </source>
</reference>
<reference key="2">
    <citation type="journal article" date="2013" name="Proc. Natl. Acad. Sci. U.S.A.">
        <title>The king cobra genome reveals dynamic gene evolution and adaptation in the snake venom system.</title>
        <authorList>
            <person name="Vonk F.J."/>
            <person name="Casewell N.R."/>
            <person name="Henkel C.V."/>
            <person name="Heimberg A.M."/>
            <person name="Jansen H.J."/>
            <person name="McCleary R.J."/>
            <person name="Kerkkamp H.M."/>
            <person name="Vos R.A."/>
            <person name="Guerreiro I."/>
            <person name="Calvete J.J."/>
            <person name="Wuster W."/>
            <person name="Woods A.E."/>
            <person name="Logan J.M."/>
            <person name="Harrison R.A."/>
            <person name="Castoe T.A."/>
            <person name="de Koning A.P."/>
            <person name="Pollock D.D."/>
            <person name="Yandell M."/>
            <person name="Calderon D."/>
            <person name="Renjifo C."/>
            <person name="Currier R.B."/>
            <person name="Salgado D."/>
            <person name="Pla D."/>
            <person name="Sanz L."/>
            <person name="Hyder A.S."/>
            <person name="Ribeiro J.M."/>
            <person name="Arntzen J.W."/>
            <person name="van den Thillart G.E."/>
            <person name="Boetzer M."/>
            <person name="Pirovano W."/>
            <person name="Dirks R.P."/>
            <person name="Spaink H.P."/>
            <person name="Duboule D."/>
            <person name="McGlinn E."/>
            <person name="Kini R.M."/>
            <person name="Richardson M.K."/>
        </authorList>
    </citation>
    <scope>IDENTIFICATION BY MASS SPECTROMETRY</scope>
    <source>
        <tissue>Venom</tissue>
    </source>
</reference>
<accession>B6RLX2</accession>
<protein>
    <recommendedName>
        <fullName>Kunitz-type serine protease inhibitor TCI</fullName>
    </recommendedName>
    <alternativeName>
        <fullName>Trypsin and chymotrypsin bi-functional serine protease inhibitor</fullName>
        <shortName>OH-TCI</shortName>
    </alternativeName>
</protein>
<name>VKTCT_OPHHA</name>